<organism>
    <name type="scientific">Lachnoclostridium phytofermentans (strain ATCC 700394 / DSM 18823 / ISDg)</name>
    <name type="common">Clostridium phytofermentans</name>
    <dbReference type="NCBI Taxonomy" id="357809"/>
    <lineage>
        <taxon>Bacteria</taxon>
        <taxon>Bacillati</taxon>
        <taxon>Bacillota</taxon>
        <taxon>Clostridia</taxon>
        <taxon>Lachnospirales</taxon>
        <taxon>Lachnospiraceae</taxon>
    </lineage>
</organism>
<protein>
    <recommendedName>
        <fullName evidence="1">Arginine repressor</fullName>
    </recommendedName>
</protein>
<proteinExistence type="inferred from homology"/>
<evidence type="ECO:0000255" key="1">
    <source>
        <dbReference type="HAMAP-Rule" id="MF_00173"/>
    </source>
</evidence>
<comment type="function">
    <text evidence="1">Regulates arginine biosynthesis genes.</text>
</comment>
<comment type="pathway">
    <text>Amino-acid biosynthesis; L-arginine biosynthesis [regulation].</text>
</comment>
<comment type="subcellular location">
    <subcellularLocation>
        <location evidence="1">Cytoplasm</location>
    </subcellularLocation>
</comment>
<comment type="similarity">
    <text evidence="1">Belongs to the ArgR family.</text>
</comment>
<name>ARGR_LACP7</name>
<dbReference type="EMBL" id="CP000885">
    <property type="protein sequence ID" value="ABX42869.1"/>
    <property type="molecule type" value="Genomic_DNA"/>
</dbReference>
<dbReference type="RefSeq" id="WP_012200522.1">
    <property type="nucleotide sequence ID" value="NC_010001.1"/>
</dbReference>
<dbReference type="SMR" id="A9KMB5"/>
<dbReference type="STRING" id="357809.Cphy_2508"/>
<dbReference type="KEGG" id="cpy:Cphy_2508"/>
<dbReference type="eggNOG" id="COG1438">
    <property type="taxonomic scope" value="Bacteria"/>
</dbReference>
<dbReference type="HOGENOM" id="CLU_097103_3_2_9"/>
<dbReference type="OrthoDB" id="9807089at2"/>
<dbReference type="UniPathway" id="UPA00068"/>
<dbReference type="Proteomes" id="UP000000370">
    <property type="component" value="Chromosome"/>
</dbReference>
<dbReference type="GO" id="GO:0005737">
    <property type="term" value="C:cytoplasm"/>
    <property type="evidence" value="ECO:0007669"/>
    <property type="project" value="UniProtKB-SubCell"/>
</dbReference>
<dbReference type="GO" id="GO:0034618">
    <property type="term" value="F:arginine binding"/>
    <property type="evidence" value="ECO:0007669"/>
    <property type="project" value="InterPro"/>
</dbReference>
<dbReference type="GO" id="GO:0003677">
    <property type="term" value="F:DNA binding"/>
    <property type="evidence" value="ECO:0007669"/>
    <property type="project" value="UniProtKB-KW"/>
</dbReference>
<dbReference type="GO" id="GO:0003700">
    <property type="term" value="F:DNA-binding transcription factor activity"/>
    <property type="evidence" value="ECO:0007669"/>
    <property type="project" value="UniProtKB-UniRule"/>
</dbReference>
<dbReference type="GO" id="GO:0006526">
    <property type="term" value="P:L-arginine biosynthetic process"/>
    <property type="evidence" value="ECO:0007669"/>
    <property type="project" value="UniProtKB-UniPathway"/>
</dbReference>
<dbReference type="GO" id="GO:0051259">
    <property type="term" value="P:protein complex oligomerization"/>
    <property type="evidence" value="ECO:0007669"/>
    <property type="project" value="InterPro"/>
</dbReference>
<dbReference type="GO" id="GO:1900079">
    <property type="term" value="P:regulation of arginine biosynthetic process"/>
    <property type="evidence" value="ECO:0007669"/>
    <property type="project" value="UniProtKB-UniRule"/>
</dbReference>
<dbReference type="Gene3D" id="3.30.1360.40">
    <property type="match status" value="1"/>
</dbReference>
<dbReference type="Gene3D" id="1.10.10.10">
    <property type="entry name" value="Winged helix-like DNA-binding domain superfamily/Winged helix DNA-binding domain"/>
    <property type="match status" value="1"/>
</dbReference>
<dbReference type="HAMAP" id="MF_00173">
    <property type="entry name" value="Arg_repressor"/>
    <property type="match status" value="1"/>
</dbReference>
<dbReference type="InterPro" id="IPR001669">
    <property type="entry name" value="Arg_repress"/>
</dbReference>
<dbReference type="InterPro" id="IPR020899">
    <property type="entry name" value="Arg_repress_C"/>
</dbReference>
<dbReference type="InterPro" id="IPR036251">
    <property type="entry name" value="Arg_repress_C_sf"/>
</dbReference>
<dbReference type="InterPro" id="IPR020900">
    <property type="entry name" value="Arg_repress_DNA-bd"/>
</dbReference>
<dbReference type="InterPro" id="IPR036388">
    <property type="entry name" value="WH-like_DNA-bd_sf"/>
</dbReference>
<dbReference type="InterPro" id="IPR036390">
    <property type="entry name" value="WH_DNA-bd_sf"/>
</dbReference>
<dbReference type="NCBIfam" id="TIGR01529">
    <property type="entry name" value="argR_whole"/>
    <property type="match status" value="1"/>
</dbReference>
<dbReference type="PANTHER" id="PTHR34471">
    <property type="entry name" value="ARGININE REPRESSOR"/>
    <property type="match status" value="1"/>
</dbReference>
<dbReference type="PANTHER" id="PTHR34471:SF1">
    <property type="entry name" value="ARGININE REPRESSOR"/>
    <property type="match status" value="1"/>
</dbReference>
<dbReference type="Pfam" id="PF01316">
    <property type="entry name" value="Arg_repressor"/>
    <property type="match status" value="1"/>
</dbReference>
<dbReference type="Pfam" id="PF02863">
    <property type="entry name" value="Arg_repressor_C"/>
    <property type="match status" value="1"/>
</dbReference>
<dbReference type="PRINTS" id="PR01467">
    <property type="entry name" value="ARGREPRESSOR"/>
</dbReference>
<dbReference type="SUPFAM" id="SSF55252">
    <property type="entry name" value="C-terminal domain of arginine repressor"/>
    <property type="match status" value="1"/>
</dbReference>
<dbReference type="SUPFAM" id="SSF46785">
    <property type="entry name" value="Winged helix' DNA-binding domain"/>
    <property type="match status" value="1"/>
</dbReference>
<reference key="1">
    <citation type="submission" date="2007-11" db="EMBL/GenBank/DDBJ databases">
        <title>Complete genome sequence of Clostridium phytofermentans ISDg.</title>
        <authorList>
            <person name="Leschine S.B."/>
            <person name="Warnick T.A."/>
            <person name="Blanchard J.L."/>
            <person name="Schnell D.J."/>
            <person name="Petit E.L."/>
            <person name="LaTouf W.G."/>
            <person name="Copeland A."/>
            <person name="Lucas S."/>
            <person name="Lapidus A."/>
            <person name="Barry K."/>
            <person name="Glavina del Rio T."/>
            <person name="Dalin E."/>
            <person name="Tice H."/>
            <person name="Pitluck S."/>
            <person name="Kiss H."/>
            <person name="Brettin T."/>
            <person name="Bruce D."/>
            <person name="Detter J.C."/>
            <person name="Han C."/>
            <person name="Kuske C."/>
            <person name="Schmutz J."/>
            <person name="Larimer F."/>
            <person name="Land M."/>
            <person name="Hauser L."/>
            <person name="Kyrpides N."/>
            <person name="Kim E.A."/>
            <person name="Richardson P."/>
        </authorList>
    </citation>
    <scope>NUCLEOTIDE SEQUENCE [LARGE SCALE GENOMIC DNA]</scope>
    <source>
        <strain>ATCC 700394 / DSM 18823 / ISDg</strain>
    </source>
</reference>
<sequence length="152" mass="16680">MKIGRQSKIVELISKHNIETQEELADLLVKAGYRVTQATISRDIRELKLTKVATDNGKQKYIVLTNQESGMSEKYIRILRDGFVSMDMAQNIIIVKTVSGMAMAVAAALDALHIEGIVGCIAGDDTIMCAIRTVPDTISVMEKLSKLINGNK</sequence>
<accession>A9KMB5</accession>
<feature type="chain" id="PRO_1000077124" description="Arginine repressor">
    <location>
        <begin position="1"/>
        <end position="152"/>
    </location>
</feature>
<keyword id="KW-0028">Amino-acid biosynthesis</keyword>
<keyword id="KW-0055">Arginine biosynthesis</keyword>
<keyword id="KW-0963">Cytoplasm</keyword>
<keyword id="KW-0238">DNA-binding</keyword>
<keyword id="KW-1185">Reference proteome</keyword>
<keyword id="KW-0678">Repressor</keyword>
<keyword id="KW-0804">Transcription</keyword>
<keyword id="KW-0805">Transcription regulation</keyword>
<gene>
    <name evidence="1" type="primary">argR</name>
    <name type="ordered locus">Cphy_2508</name>
</gene>